<sequence>MEKLQDQYSFLCSENIRKTNPLILNILQKLDEEIEKRPKEKITVNIAGNSRLDSGQRITSEDFWLLSKALRNHPCIGGVDVRYNLIGDVGAYYAAKLLQKQPNITYLNLMFNDIGPEGGELIAKALQKNKTLKYLRMTGNKIENTGGMLFAAMLQMNSSLEKLDLGDCDLGLQSVIAFSTVLTQNKAIKGINLNRPILYGEQEESTVHIGHMSKQNHVLVELHMCKHGMKNYGIQQLCNALHSNSTLRYLDVSCNKITRDGMVFLADVLKSNSTLEVLDLSFNRIENAGAKYLSETLTSHNRSLKALSVVSNKIEGEGLVALSQSMNTNLVLSNIYIWGNKFDEDTCVAYSNLIESGRLKPENTDVEPYVVDEHIYLSEVSNGLKRHYYWTPTYGECYVPSSSAGFALVPVGERL</sequence>
<keyword id="KW-0963">Cytoplasm</keyword>
<keyword id="KW-0221">Differentiation</keyword>
<keyword id="KW-0433">Leucine-rich repeat</keyword>
<keyword id="KW-0539">Nucleus</keyword>
<keyword id="KW-1185">Reference proteome</keyword>
<keyword id="KW-0677">Repeat</keyword>
<dbReference type="EMBL" id="BC097432">
    <property type="protein sequence ID" value="AAH97432.1"/>
    <property type="molecule type" value="mRNA"/>
</dbReference>
<dbReference type="RefSeq" id="NP_001038161.1">
    <property type="nucleotide sequence ID" value="NM_001044696.1"/>
</dbReference>
<dbReference type="SMR" id="Q4V8D9"/>
<dbReference type="FunCoup" id="Q4V8D9">
    <property type="interactions" value="709"/>
</dbReference>
<dbReference type="STRING" id="10116.ENSRNOP00000033262"/>
<dbReference type="iPTMnet" id="Q4V8D9"/>
<dbReference type="PhosphoSitePlus" id="Q4V8D9"/>
<dbReference type="PaxDb" id="10116-ENSRNOP00000033262"/>
<dbReference type="GeneID" id="499589"/>
<dbReference type="KEGG" id="rno:499589"/>
<dbReference type="UCSC" id="RGD:1565052">
    <property type="organism name" value="rat"/>
</dbReference>
<dbReference type="AGR" id="RGD:1565052"/>
<dbReference type="CTD" id="151827"/>
<dbReference type="RGD" id="1565052">
    <property type="gene designation" value="Lrrc34"/>
</dbReference>
<dbReference type="eggNOG" id="KOG4308">
    <property type="taxonomic scope" value="Eukaryota"/>
</dbReference>
<dbReference type="InParanoid" id="Q4V8D9"/>
<dbReference type="OrthoDB" id="272549at2759"/>
<dbReference type="PhylomeDB" id="Q4V8D9"/>
<dbReference type="PRO" id="PR:Q4V8D9"/>
<dbReference type="Proteomes" id="UP000002494">
    <property type="component" value="Unplaced"/>
</dbReference>
<dbReference type="GO" id="GO:0005737">
    <property type="term" value="C:cytoplasm"/>
    <property type="evidence" value="ECO:0007669"/>
    <property type="project" value="UniProtKB-SubCell"/>
</dbReference>
<dbReference type="GO" id="GO:0005730">
    <property type="term" value="C:nucleolus"/>
    <property type="evidence" value="ECO:0007669"/>
    <property type="project" value="UniProtKB-SubCell"/>
</dbReference>
<dbReference type="GO" id="GO:0030154">
    <property type="term" value="P:cell differentiation"/>
    <property type="evidence" value="ECO:0007669"/>
    <property type="project" value="UniProtKB-KW"/>
</dbReference>
<dbReference type="Gene3D" id="3.80.10.10">
    <property type="entry name" value="Ribonuclease Inhibitor"/>
    <property type="match status" value="2"/>
</dbReference>
<dbReference type="InterPro" id="IPR001611">
    <property type="entry name" value="Leu-rich_rpt"/>
</dbReference>
<dbReference type="InterPro" id="IPR052201">
    <property type="entry name" value="LRR-containing_regulator"/>
</dbReference>
<dbReference type="InterPro" id="IPR032675">
    <property type="entry name" value="LRR_dom_sf"/>
</dbReference>
<dbReference type="PANTHER" id="PTHR24111">
    <property type="entry name" value="LEUCINE-RICH REPEAT-CONTAINING PROTEIN 34"/>
    <property type="match status" value="1"/>
</dbReference>
<dbReference type="PANTHER" id="PTHR24111:SF4">
    <property type="entry name" value="LEUCINE-RICH REPEAT-CONTAINING PROTEIN 34"/>
    <property type="match status" value="1"/>
</dbReference>
<dbReference type="Pfam" id="PF13516">
    <property type="entry name" value="LRR_6"/>
    <property type="match status" value="6"/>
</dbReference>
<dbReference type="SMART" id="SM00368">
    <property type="entry name" value="LRR_RI"/>
    <property type="match status" value="9"/>
</dbReference>
<dbReference type="SUPFAM" id="SSF52047">
    <property type="entry name" value="RNI-like"/>
    <property type="match status" value="1"/>
</dbReference>
<proteinExistence type="evidence at transcript level"/>
<gene>
    <name type="primary">Lrrc34</name>
</gene>
<name>LRC34_RAT</name>
<organism>
    <name type="scientific">Rattus norvegicus</name>
    <name type="common">Rat</name>
    <dbReference type="NCBI Taxonomy" id="10116"/>
    <lineage>
        <taxon>Eukaryota</taxon>
        <taxon>Metazoa</taxon>
        <taxon>Chordata</taxon>
        <taxon>Craniata</taxon>
        <taxon>Vertebrata</taxon>
        <taxon>Euteleostomi</taxon>
        <taxon>Mammalia</taxon>
        <taxon>Eutheria</taxon>
        <taxon>Euarchontoglires</taxon>
        <taxon>Glires</taxon>
        <taxon>Rodentia</taxon>
        <taxon>Myomorpha</taxon>
        <taxon>Muroidea</taxon>
        <taxon>Muridae</taxon>
        <taxon>Murinae</taxon>
        <taxon>Rattus</taxon>
    </lineage>
</organism>
<accession>Q4V8D9</accession>
<evidence type="ECO:0000250" key="1">
    <source>
        <dbReference type="UniProtKB" id="Q9DAM1"/>
    </source>
</evidence>
<comment type="function">
    <text evidence="1">Highly expressed in stem cells where it may be involved in regulation of pluripotency. In embryonic stem cells (ESCs), important for normal expression of the pluripotency regulators POU5F1/OCT4 and KLF4. Also important for expression of the ectodermal marker gene NES and the endodermal marker gene GATA4. Promotes stem cell proliferation in vitro.</text>
</comment>
<comment type="subunit">
    <text evidence="1">Interacts with NPM1 and NCL.</text>
</comment>
<comment type="subcellular location">
    <subcellularLocation>
        <location evidence="1">Nucleus</location>
    </subcellularLocation>
    <subcellularLocation>
        <location evidence="1">Nucleus</location>
        <location evidence="1">Nucleolus</location>
    </subcellularLocation>
    <subcellularLocation>
        <location evidence="1">Cytoplasm</location>
    </subcellularLocation>
    <text evidence="1">As stem cells differentiate, translocates from the nucleolus to the nucleus and then to the cytoplasm. Colocalizes with NPM1 and NCL in the nucleolus.</text>
</comment>
<reference key="1">
    <citation type="journal article" date="2004" name="Genome Res.">
        <title>The status, quality, and expansion of the NIH full-length cDNA project: the Mammalian Gene Collection (MGC).</title>
        <authorList>
            <consortium name="The MGC Project Team"/>
        </authorList>
    </citation>
    <scope>NUCLEOTIDE SEQUENCE [LARGE SCALE MRNA]</scope>
    <source>
        <tissue>Testis</tissue>
    </source>
</reference>
<feature type="chain" id="PRO_0000228671" description="Leucine-rich repeat-containing protein 34">
    <location>
        <begin position="1"/>
        <end position="415"/>
    </location>
</feature>
<feature type="repeat" description="LRR 1">
    <location>
        <begin position="246"/>
        <end position="272"/>
    </location>
</feature>
<feature type="repeat" description="LRR 2">
    <location>
        <begin position="274"/>
        <end position="296"/>
    </location>
</feature>
<protein>
    <recommendedName>
        <fullName>Leucine-rich repeat-containing protein 34</fullName>
    </recommendedName>
</protein>